<organism>
    <name type="scientific">Yersinia pestis</name>
    <dbReference type="NCBI Taxonomy" id="632"/>
    <lineage>
        <taxon>Bacteria</taxon>
        <taxon>Pseudomonadati</taxon>
        <taxon>Pseudomonadota</taxon>
        <taxon>Gammaproteobacteria</taxon>
        <taxon>Enterobacterales</taxon>
        <taxon>Yersiniaceae</taxon>
        <taxon>Yersinia</taxon>
    </lineage>
</organism>
<name>CHEZ_YERPE</name>
<protein>
    <recommendedName>
        <fullName>Protein phosphatase CheZ</fullName>
        <ecNumber>3.1.3.-</ecNumber>
    </recommendedName>
    <alternativeName>
        <fullName>Chemotaxis protein CheZ</fullName>
    </alternativeName>
</protein>
<proteinExistence type="inferred from homology"/>
<comment type="function">
    <text evidence="1">Plays an important role in bacterial chemotaxis signal transduction pathway by accelerating the dephosphorylation of phosphorylated CheY (CheY-P).</text>
</comment>
<comment type="subunit">
    <text evidence="1">Homodimer.</text>
</comment>
<comment type="subcellular location">
    <subcellularLocation>
        <location evidence="1">Cytoplasm</location>
    </subcellularLocation>
</comment>
<comment type="similarity">
    <text evidence="2">Belongs to the CheZ family.</text>
</comment>
<sequence length="214" mass="23771">MNNHPMPATDAASASDIISRIGSLTRMLRDSLRELGLDQAIAQAAEAIPDARDRLDYVVHMTAQAAERALNCVEAAQPRQNELESSAKALKIRWDEWFANPIELSDARSLVTDTREYLAVVPQHTSFTNAQLLEIMMAQDFQDLTGQVIKRMMDVVQEIEKQLLMVLMENIPDIPSKPQKPTDSLLNGPQMDKNVAGVIASQDQVDDLLDSLGF</sequence>
<gene>
    <name type="primary">cheZ</name>
    <name type="ordered locus">YPO1681</name>
    <name type="ordered locus">y1843</name>
    <name type="ordered locus">YP_1811</name>
</gene>
<feature type="chain" id="PRO_0000410788" description="Protein phosphatase CheZ">
    <location>
        <begin position="1"/>
        <end position="214"/>
    </location>
</feature>
<feature type="site" description="Enhances dephosphorylation of CheY-P" evidence="1">
    <location>
        <position position="147"/>
    </location>
</feature>
<accession>Q7CIX9</accession>
<accession>Q74UB9</accession>
<keyword id="KW-0145">Chemotaxis</keyword>
<keyword id="KW-0963">Cytoplasm</keyword>
<keyword id="KW-0283">Flagellar rotation</keyword>
<keyword id="KW-0378">Hydrolase</keyword>
<keyword id="KW-0904">Protein phosphatase</keyword>
<keyword id="KW-1185">Reference proteome</keyword>
<reference key="1">
    <citation type="journal article" date="2001" name="Nature">
        <title>Genome sequence of Yersinia pestis, the causative agent of plague.</title>
        <authorList>
            <person name="Parkhill J."/>
            <person name="Wren B.W."/>
            <person name="Thomson N.R."/>
            <person name="Titball R.W."/>
            <person name="Holden M.T.G."/>
            <person name="Prentice M.B."/>
            <person name="Sebaihia M."/>
            <person name="James K.D."/>
            <person name="Churcher C.M."/>
            <person name="Mungall K.L."/>
            <person name="Baker S."/>
            <person name="Basham D."/>
            <person name="Bentley S.D."/>
            <person name="Brooks K."/>
            <person name="Cerdeno-Tarraga A.-M."/>
            <person name="Chillingworth T."/>
            <person name="Cronin A."/>
            <person name="Davies R.M."/>
            <person name="Davis P."/>
            <person name="Dougan G."/>
            <person name="Feltwell T."/>
            <person name="Hamlin N."/>
            <person name="Holroyd S."/>
            <person name="Jagels K."/>
            <person name="Karlyshev A.V."/>
            <person name="Leather S."/>
            <person name="Moule S."/>
            <person name="Oyston P.C.F."/>
            <person name="Quail M.A."/>
            <person name="Rutherford K.M."/>
            <person name="Simmonds M."/>
            <person name="Skelton J."/>
            <person name="Stevens K."/>
            <person name="Whitehead S."/>
            <person name="Barrell B.G."/>
        </authorList>
    </citation>
    <scope>NUCLEOTIDE SEQUENCE [LARGE SCALE GENOMIC DNA]</scope>
    <source>
        <strain>CO-92 / Biovar Orientalis</strain>
    </source>
</reference>
<reference key="2">
    <citation type="journal article" date="2002" name="J. Bacteriol.">
        <title>Genome sequence of Yersinia pestis KIM.</title>
        <authorList>
            <person name="Deng W."/>
            <person name="Burland V."/>
            <person name="Plunkett G. III"/>
            <person name="Boutin A."/>
            <person name="Mayhew G.F."/>
            <person name="Liss P."/>
            <person name="Perna N.T."/>
            <person name="Rose D.J."/>
            <person name="Mau B."/>
            <person name="Zhou S."/>
            <person name="Schwartz D.C."/>
            <person name="Fetherston J.D."/>
            <person name="Lindler L.E."/>
            <person name="Brubaker R.R."/>
            <person name="Plano G.V."/>
            <person name="Straley S.C."/>
            <person name="McDonough K.A."/>
            <person name="Nilles M.L."/>
            <person name="Matson J.S."/>
            <person name="Blattner F.R."/>
            <person name="Perry R.D."/>
        </authorList>
    </citation>
    <scope>NUCLEOTIDE SEQUENCE [LARGE SCALE GENOMIC DNA]</scope>
    <source>
        <strain>KIM10+ / Biovar Mediaevalis</strain>
    </source>
</reference>
<reference key="3">
    <citation type="journal article" date="2004" name="DNA Res.">
        <title>Complete genome sequence of Yersinia pestis strain 91001, an isolate avirulent to humans.</title>
        <authorList>
            <person name="Song Y."/>
            <person name="Tong Z."/>
            <person name="Wang J."/>
            <person name="Wang L."/>
            <person name="Guo Z."/>
            <person name="Han Y."/>
            <person name="Zhang J."/>
            <person name="Pei D."/>
            <person name="Zhou D."/>
            <person name="Qin H."/>
            <person name="Pang X."/>
            <person name="Han Y."/>
            <person name="Zhai J."/>
            <person name="Li M."/>
            <person name="Cui B."/>
            <person name="Qi Z."/>
            <person name="Jin L."/>
            <person name="Dai R."/>
            <person name="Chen F."/>
            <person name="Li S."/>
            <person name="Ye C."/>
            <person name="Du Z."/>
            <person name="Lin W."/>
            <person name="Wang J."/>
            <person name="Yu J."/>
            <person name="Yang H."/>
            <person name="Wang J."/>
            <person name="Huang P."/>
            <person name="Yang R."/>
        </authorList>
    </citation>
    <scope>NUCLEOTIDE SEQUENCE [LARGE SCALE GENOMIC DNA]</scope>
    <source>
        <strain>91001 / Biovar Mediaevalis</strain>
    </source>
</reference>
<evidence type="ECO:0000250" key="1"/>
<evidence type="ECO:0000305" key="2"/>
<dbReference type="EC" id="3.1.3.-"/>
<dbReference type="EMBL" id="AL590842">
    <property type="protein sequence ID" value="CAL20325.1"/>
    <property type="molecule type" value="Genomic_DNA"/>
</dbReference>
<dbReference type="EMBL" id="AE009952">
    <property type="protein sequence ID" value="AAM85410.1"/>
    <property type="molecule type" value="Genomic_DNA"/>
</dbReference>
<dbReference type="EMBL" id="AE017042">
    <property type="protein sequence ID" value="AAS62036.1"/>
    <property type="molecule type" value="Genomic_DNA"/>
</dbReference>
<dbReference type="PIR" id="AB0205">
    <property type="entry name" value="AB0205"/>
</dbReference>
<dbReference type="RefSeq" id="WP_002210872.1">
    <property type="nucleotide sequence ID" value="NZ_WUCM01000082.1"/>
</dbReference>
<dbReference type="RefSeq" id="YP_002346686.1">
    <property type="nucleotide sequence ID" value="NC_003143.1"/>
</dbReference>
<dbReference type="SMR" id="Q7CIX9"/>
<dbReference type="IntAct" id="Q7CIX9">
    <property type="interactions" value="1"/>
</dbReference>
<dbReference type="STRING" id="214092.YPO1681"/>
<dbReference type="PaxDb" id="214092-YPO1681"/>
<dbReference type="DNASU" id="1146790"/>
<dbReference type="EnsemblBacteria" id="AAS62036">
    <property type="protein sequence ID" value="AAS62036"/>
    <property type="gene ID" value="YP_1811"/>
</dbReference>
<dbReference type="GeneID" id="57976897"/>
<dbReference type="KEGG" id="ype:YPO1681"/>
<dbReference type="KEGG" id="ypk:y1843"/>
<dbReference type="KEGG" id="ypm:YP_1811"/>
<dbReference type="PATRIC" id="fig|214092.21.peg.2026"/>
<dbReference type="eggNOG" id="COG3143">
    <property type="taxonomic scope" value="Bacteria"/>
</dbReference>
<dbReference type="HOGENOM" id="CLU_080718_1_0_6"/>
<dbReference type="OMA" id="DWGRFMR"/>
<dbReference type="OrthoDB" id="9773007at2"/>
<dbReference type="Proteomes" id="UP000000815">
    <property type="component" value="Chromosome"/>
</dbReference>
<dbReference type="Proteomes" id="UP000001019">
    <property type="component" value="Chromosome"/>
</dbReference>
<dbReference type="Proteomes" id="UP000002490">
    <property type="component" value="Chromosome"/>
</dbReference>
<dbReference type="GO" id="GO:0009288">
    <property type="term" value="C:bacterial-type flagellum"/>
    <property type="evidence" value="ECO:0007669"/>
    <property type="project" value="InterPro"/>
</dbReference>
<dbReference type="GO" id="GO:0005737">
    <property type="term" value="C:cytoplasm"/>
    <property type="evidence" value="ECO:0007669"/>
    <property type="project" value="UniProtKB-SubCell"/>
</dbReference>
<dbReference type="GO" id="GO:0004721">
    <property type="term" value="F:phosphoprotein phosphatase activity"/>
    <property type="evidence" value="ECO:0007669"/>
    <property type="project" value="UniProtKB-KW"/>
</dbReference>
<dbReference type="GO" id="GO:0097588">
    <property type="term" value="P:archaeal or bacterial-type flagellum-dependent cell motility"/>
    <property type="evidence" value="ECO:0007669"/>
    <property type="project" value="UniProtKB-KW"/>
</dbReference>
<dbReference type="GO" id="GO:0006935">
    <property type="term" value="P:chemotaxis"/>
    <property type="evidence" value="ECO:0007669"/>
    <property type="project" value="UniProtKB-KW"/>
</dbReference>
<dbReference type="GO" id="GO:0050920">
    <property type="term" value="P:regulation of chemotaxis"/>
    <property type="evidence" value="ECO:0007669"/>
    <property type="project" value="InterPro"/>
</dbReference>
<dbReference type="Gene3D" id="1.10.287.500">
    <property type="entry name" value="Helix hairpin bin"/>
    <property type="match status" value="1"/>
</dbReference>
<dbReference type="Gene3D" id="1.20.5.590">
    <property type="entry name" value="Single helix bin"/>
    <property type="match status" value="1"/>
</dbReference>
<dbReference type="InterPro" id="IPR007439">
    <property type="entry name" value="Chemotax_Pase_CheZ"/>
</dbReference>
<dbReference type="InterPro" id="IPR050992">
    <property type="entry name" value="CheZ_family_phosphatases"/>
</dbReference>
<dbReference type="NCBIfam" id="NF008368">
    <property type="entry name" value="PRK11166.1"/>
    <property type="match status" value="1"/>
</dbReference>
<dbReference type="PANTHER" id="PTHR43693">
    <property type="entry name" value="PROTEIN PHOSPHATASE CHEZ"/>
    <property type="match status" value="1"/>
</dbReference>
<dbReference type="PANTHER" id="PTHR43693:SF1">
    <property type="entry name" value="PROTEIN PHOSPHATASE CHEZ"/>
    <property type="match status" value="1"/>
</dbReference>
<dbReference type="Pfam" id="PF04344">
    <property type="entry name" value="CheZ"/>
    <property type="match status" value="1"/>
</dbReference>
<dbReference type="PIRSF" id="PIRSF002884">
    <property type="entry name" value="CheZ"/>
    <property type="match status" value="1"/>
</dbReference>
<dbReference type="SUPFAM" id="SSF75708">
    <property type="entry name" value="Chemotaxis phosphatase CheZ"/>
    <property type="match status" value="1"/>
</dbReference>